<comment type="function">
    <text evidence="1">Catalyzes the phosphorylation of the position 2 hydroxy group of 4-diphosphocytidyl-2C-methyl-D-erythritol.</text>
</comment>
<comment type="catalytic activity">
    <reaction evidence="1">
        <text>4-CDP-2-C-methyl-D-erythritol + ATP = 4-CDP-2-C-methyl-D-erythritol 2-phosphate + ADP + H(+)</text>
        <dbReference type="Rhea" id="RHEA:18437"/>
        <dbReference type="ChEBI" id="CHEBI:15378"/>
        <dbReference type="ChEBI" id="CHEBI:30616"/>
        <dbReference type="ChEBI" id="CHEBI:57823"/>
        <dbReference type="ChEBI" id="CHEBI:57919"/>
        <dbReference type="ChEBI" id="CHEBI:456216"/>
        <dbReference type="EC" id="2.7.1.148"/>
    </reaction>
</comment>
<comment type="pathway">
    <text evidence="1">Isoprenoid biosynthesis; isopentenyl diphosphate biosynthesis via DXP pathway; isopentenyl diphosphate from 1-deoxy-D-xylulose 5-phosphate: step 3/6.</text>
</comment>
<comment type="similarity">
    <text evidence="1">Belongs to the GHMP kinase family. IspE subfamily.</text>
</comment>
<reference key="1">
    <citation type="journal article" date="2003" name="Proc. Natl. Acad. Sci. U.S.A.">
        <title>The complete genome sequence of Chromobacterium violaceum reveals remarkable and exploitable bacterial adaptability.</title>
        <authorList>
            <person name="Vasconcelos A.T.R."/>
            <person name="de Almeida D.F."/>
            <person name="Hungria M."/>
            <person name="Guimaraes C.T."/>
            <person name="Antonio R.V."/>
            <person name="Almeida F.C."/>
            <person name="de Almeida L.G.P."/>
            <person name="de Almeida R."/>
            <person name="Alves-Gomes J.A."/>
            <person name="Andrade E.M."/>
            <person name="Araripe J."/>
            <person name="de Araujo M.F.F."/>
            <person name="Astolfi-Filho S."/>
            <person name="Azevedo V."/>
            <person name="Baptista A.J."/>
            <person name="Bataus L.A.M."/>
            <person name="Batista J.S."/>
            <person name="Belo A."/>
            <person name="van den Berg C."/>
            <person name="Bogo M."/>
            <person name="Bonatto S."/>
            <person name="Bordignon J."/>
            <person name="Brigido M.M."/>
            <person name="Brito C.A."/>
            <person name="Brocchi M."/>
            <person name="Burity H.A."/>
            <person name="Camargo A.A."/>
            <person name="Cardoso D.D.P."/>
            <person name="Carneiro N.P."/>
            <person name="Carraro D.M."/>
            <person name="Carvalho C.M.B."/>
            <person name="Cascardo J.C.M."/>
            <person name="Cavada B.S."/>
            <person name="Chueire L.M.O."/>
            <person name="Creczynski-Pasa T.B."/>
            <person name="Cunha-Junior N.C."/>
            <person name="Fagundes N."/>
            <person name="Falcao C.L."/>
            <person name="Fantinatti F."/>
            <person name="Farias I.P."/>
            <person name="Felipe M.S.S."/>
            <person name="Ferrari L.P."/>
            <person name="Ferro J.A."/>
            <person name="Ferro M.I.T."/>
            <person name="Franco G.R."/>
            <person name="Freitas N.S.A."/>
            <person name="Furlan L.R."/>
            <person name="Gazzinelli R.T."/>
            <person name="Gomes E.A."/>
            <person name="Goncalves P.R."/>
            <person name="Grangeiro T.B."/>
            <person name="Grattapaglia D."/>
            <person name="Grisard E.C."/>
            <person name="Hanna E.S."/>
            <person name="Jardim S.N."/>
            <person name="Laurino J."/>
            <person name="Leoi L.C.T."/>
            <person name="Lima L.F.A."/>
            <person name="Loureiro M.F."/>
            <person name="Lyra M.C.C.P."/>
            <person name="Madeira H.M.F."/>
            <person name="Manfio G.P."/>
            <person name="Maranhao A.Q."/>
            <person name="Martins W.S."/>
            <person name="di Mauro S.M.Z."/>
            <person name="de Medeiros S.R.B."/>
            <person name="Meissner R.V."/>
            <person name="Moreira M.A.M."/>
            <person name="Nascimento F.F."/>
            <person name="Nicolas M.F."/>
            <person name="Oliveira J.G."/>
            <person name="Oliveira S.C."/>
            <person name="Paixao R.F.C."/>
            <person name="Parente J.A."/>
            <person name="Pedrosa F.O."/>
            <person name="Pena S.D.J."/>
            <person name="Pereira J.O."/>
            <person name="Pereira M."/>
            <person name="Pinto L.S.R.C."/>
            <person name="Pinto L.S."/>
            <person name="Porto J.I.R."/>
            <person name="Potrich D.P."/>
            <person name="Ramalho-Neto C.E."/>
            <person name="Reis A.M.M."/>
            <person name="Rigo L.U."/>
            <person name="Rondinelli E."/>
            <person name="Santos E.B.P."/>
            <person name="Santos F.R."/>
            <person name="Schneider M.P.C."/>
            <person name="Seuanez H.N."/>
            <person name="Silva A.M.R."/>
            <person name="da Silva A.L.C."/>
            <person name="Silva D.W."/>
            <person name="Silva R."/>
            <person name="Simoes I.C."/>
            <person name="Simon D."/>
            <person name="Soares C.M.A."/>
            <person name="Soares R.B.A."/>
            <person name="Souza E.M."/>
            <person name="Souza K.R.L."/>
            <person name="Souza R.C."/>
            <person name="Steffens M.B.R."/>
            <person name="Steindel M."/>
            <person name="Teixeira S.R."/>
            <person name="Urmenyi T."/>
            <person name="Vettore A."/>
            <person name="Wassem R."/>
            <person name="Zaha A."/>
            <person name="Simpson A.J.G."/>
        </authorList>
    </citation>
    <scope>NUCLEOTIDE SEQUENCE [LARGE SCALE GENOMIC DNA]</scope>
    <source>
        <strain>ATCC 12472 / DSM 30191 / JCM 1249 / CCUG 213 / NBRC 12614 / NCIMB 9131 / NCTC 9757 / MK</strain>
    </source>
</reference>
<sequence length="284" mass="31380">MQHPFHSYPAPAKLNLLLHVVGKRPDGYHLLETVFRFIDFGDTLELAVRDDGQIVLLTPTDGVPPEQDLTVRAARLLQRESGCRLGASIKLEKRTPMGGGLGGGSSDAATALIALNRLWGLAWPRERLQALGLQLGADVPVFIFGRNALATGVGEVLEPIPLKPAWYLVIHPQVHVSTIEVFRNFSQTVLTEIGRVGIMRILETTQQRRNDLQSVVEKRFPAVNEVLSELRKYGSPLMTGSGSCVFLEFESKDEADKVYRVLSQKYQGFVAEGLDVHPLFDSAE</sequence>
<accession>Q7NQS8</accession>
<keyword id="KW-0067">ATP-binding</keyword>
<keyword id="KW-0414">Isoprene biosynthesis</keyword>
<keyword id="KW-0418">Kinase</keyword>
<keyword id="KW-0547">Nucleotide-binding</keyword>
<keyword id="KW-1185">Reference proteome</keyword>
<keyword id="KW-0808">Transferase</keyword>
<feature type="chain" id="PRO_0000189206" description="4-diphosphocytidyl-2-C-methyl-D-erythritol kinase">
    <location>
        <begin position="1"/>
        <end position="284"/>
    </location>
</feature>
<feature type="active site" evidence="1">
    <location>
        <position position="13"/>
    </location>
</feature>
<feature type="active site" evidence="1">
    <location>
        <position position="138"/>
    </location>
</feature>
<feature type="binding site" evidence="1">
    <location>
        <begin position="96"/>
        <end position="106"/>
    </location>
    <ligand>
        <name>ATP</name>
        <dbReference type="ChEBI" id="CHEBI:30616"/>
    </ligand>
</feature>
<organism>
    <name type="scientific">Chromobacterium violaceum (strain ATCC 12472 / DSM 30191 / JCM 1249 / CCUG 213 / NBRC 12614 / NCIMB 9131 / NCTC 9757 / MK)</name>
    <dbReference type="NCBI Taxonomy" id="243365"/>
    <lineage>
        <taxon>Bacteria</taxon>
        <taxon>Pseudomonadati</taxon>
        <taxon>Pseudomonadota</taxon>
        <taxon>Betaproteobacteria</taxon>
        <taxon>Neisseriales</taxon>
        <taxon>Chromobacteriaceae</taxon>
        <taxon>Chromobacterium</taxon>
    </lineage>
</organism>
<name>ISPE_CHRVO</name>
<dbReference type="EC" id="2.7.1.148" evidence="1"/>
<dbReference type="EMBL" id="AE016825">
    <property type="protein sequence ID" value="AAQ61719.1"/>
    <property type="molecule type" value="Genomic_DNA"/>
</dbReference>
<dbReference type="RefSeq" id="WP_011137606.1">
    <property type="nucleotide sequence ID" value="NC_005085.1"/>
</dbReference>
<dbReference type="SMR" id="Q7NQS8"/>
<dbReference type="STRING" id="243365.CV_4059"/>
<dbReference type="KEGG" id="cvi:CV_4059"/>
<dbReference type="eggNOG" id="COG1947">
    <property type="taxonomic scope" value="Bacteria"/>
</dbReference>
<dbReference type="HOGENOM" id="CLU_053057_3_0_4"/>
<dbReference type="OrthoDB" id="9809438at2"/>
<dbReference type="UniPathway" id="UPA00056">
    <property type="reaction ID" value="UER00094"/>
</dbReference>
<dbReference type="Proteomes" id="UP000001424">
    <property type="component" value="Chromosome"/>
</dbReference>
<dbReference type="GO" id="GO:0050515">
    <property type="term" value="F:4-(cytidine 5'-diphospho)-2-C-methyl-D-erythritol kinase activity"/>
    <property type="evidence" value="ECO:0007669"/>
    <property type="project" value="UniProtKB-UniRule"/>
</dbReference>
<dbReference type="GO" id="GO:0005524">
    <property type="term" value="F:ATP binding"/>
    <property type="evidence" value="ECO:0007669"/>
    <property type="project" value="UniProtKB-UniRule"/>
</dbReference>
<dbReference type="GO" id="GO:0019288">
    <property type="term" value="P:isopentenyl diphosphate biosynthetic process, methylerythritol 4-phosphate pathway"/>
    <property type="evidence" value="ECO:0007669"/>
    <property type="project" value="UniProtKB-UniRule"/>
</dbReference>
<dbReference type="GO" id="GO:0016114">
    <property type="term" value="P:terpenoid biosynthetic process"/>
    <property type="evidence" value="ECO:0007669"/>
    <property type="project" value="InterPro"/>
</dbReference>
<dbReference type="Gene3D" id="3.30.230.10">
    <property type="match status" value="1"/>
</dbReference>
<dbReference type="Gene3D" id="3.30.70.890">
    <property type="entry name" value="GHMP kinase, C-terminal domain"/>
    <property type="match status" value="1"/>
</dbReference>
<dbReference type="HAMAP" id="MF_00061">
    <property type="entry name" value="IspE"/>
    <property type="match status" value="1"/>
</dbReference>
<dbReference type="InterPro" id="IPR013750">
    <property type="entry name" value="GHMP_kinase_C_dom"/>
</dbReference>
<dbReference type="InterPro" id="IPR036554">
    <property type="entry name" value="GHMP_kinase_C_sf"/>
</dbReference>
<dbReference type="InterPro" id="IPR006204">
    <property type="entry name" value="GHMP_kinase_N_dom"/>
</dbReference>
<dbReference type="InterPro" id="IPR004424">
    <property type="entry name" value="IspE"/>
</dbReference>
<dbReference type="InterPro" id="IPR020568">
    <property type="entry name" value="Ribosomal_Su5_D2-typ_SF"/>
</dbReference>
<dbReference type="InterPro" id="IPR014721">
    <property type="entry name" value="Ribsml_uS5_D2-typ_fold_subgr"/>
</dbReference>
<dbReference type="NCBIfam" id="TIGR00154">
    <property type="entry name" value="ispE"/>
    <property type="match status" value="1"/>
</dbReference>
<dbReference type="PANTHER" id="PTHR43527">
    <property type="entry name" value="4-DIPHOSPHOCYTIDYL-2-C-METHYL-D-ERYTHRITOL KINASE, CHLOROPLASTIC"/>
    <property type="match status" value="1"/>
</dbReference>
<dbReference type="PANTHER" id="PTHR43527:SF2">
    <property type="entry name" value="4-DIPHOSPHOCYTIDYL-2-C-METHYL-D-ERYTHRITOL KINASE, CHLOROPLASTIC"/>
    <property type="match status" value="1"/>
</dbReference>
<dbReference type="Pfam" id="PF08544">
    <property type="entry name" value="GHMP_kinases_C"/>
    <property type="match status" value="1"/>
</dbReference>
<dbReference type="Pfam" id="PF00288">
    <property type="entry name" value="GHMP_kinases_N"/>
    <property type="match status" value="1"/>
</dbReference>
<dbReference type="PIRSF" id="PIRSF010376">
    <property type="entry name" value="IspE"/>
    <property type="match status" value="1"/>
</dbReference>
<dbReference type="SUPFAM" id="SSF55060">
    <property type="entry name" value="GHMP Kinase, C-terminal domain"/>
    <property type="match status" value="1"/>
</dbReference>
<dbReference type="SUPFAM" id="SSF54211">
    <property type="entry name" value="Ribosomal protein S5 domain 2-like"/>
    <property type="match status" value="1"/>
</dbReference>
<evidence type="ECO:0000255" key="1">
    <source>
        <dbReference type="HAMAP-Rule" id="MF_00061"/>
    </source>
</evidence>
<gene>
    <name evidence="1" type="primary">ispE</name>
    <name type="ordered locus">CV_4059</name>
</gene>
<protein>
    <recommendedName>
        <fullName evidence="1">4-diphosphocytidyl-2-C-methyl-D-erythritol kinase</fullName>
        <shortName evidence="1">CMK</shortName>
        <ecNumber evidence="1">2.7.1.148</ecNumber>
    </recommendedName>
    <alternativeName>
        <fullName evidence="1">4-(cytidine-5'-diphospho)-2-C-methyl-D-erythritol kinase</fullName>
    </alternativeName>
</protein>
<proteinExistence type="inferred from homology"/>